<accession>O61142</accession>
<accession>Q7KAN4</accession>
<accession>Q868D6</accession>
<dbReference type="EC" id="3.4.21.62" evidence="8 9 10 11"/>
<dbReference type="EMBL" id="AJ002594">
    <property type="protein sequence ID" value="CAA05627.1"/>
    <property type="molecule type" value="mRNA"/>
</dbReference>
<dbReference type="EMBL" id="AJ002233">
    <property type="protein sequence ID" value="CAA05261.1"/>
    <property type="molecule type" value="Genomic_DNA"/>
</dbReference>
<dbReference type="EMBL" id="AJ242589">
    <property type="protein sequence ID" value="CAC80338.1"/>
    <property type="molecule type" value="Genomic_DNA"/>
</dbReference>
<dbReference type="PDB" id="4LVN">
    <property type="method" value="X-ray"/>
    <property type="resolution" value="2.25 A"/>
    <property type="chains" value="A=330-673, P=127-219"/>
</dbReference>
<dbReference type="PDB" id="4LVO">
    <property type="method" value="X-ray"/>
    <property type="resolution" value="2.26 A"/>
    <property type="chains" value="A=330-673, P=127-219"/>
</dbReference>
<dbReference type="PDBsum" id="4LVN"/>
<dbReference type="PDBsum" id="4LVO"/>
<dbReference type="SMR" id="O61142"/>
<dbReference type="BindingDB" id="O61142"/>
<dbReference type="ChEMBL" id="CHEMBL2052035"/>
<dbReference type="MEROPS" id="S08.012"/>
<dbReference type="GlyCosmos" id="O61142">
    <property type="glycosylation" value="11 sites, No reported glycans"/>
</dbReference>
<dbReference type="VEuPathDB" id="PlasmoDB:PF3D7_0507500"/>
<dbReference type="VEuPathDB" id="PlasmoDB:Pf7G8-2_000126800"/>
<dbReference type="VEuPathDB" id="PlasmoDB:Pf7G8_050012800"/>
<dbReference type="VEuPathDB" id="PlasmoDB:PfCD01_050014000"/>
<dbReference type="VEuPathDB" id="PlasmoDB:PfDd2_050012500"/>
<dbReference type="VEuPathDB" id="PlasmoDB:PfGA01_050012000"/>
<dbReference type="VEuPathDB" id="PlasmoDB:PfGB4_050012800"/>
<dbReference type="VEuPathDB" id="PlasmoDB:PfGN01_050012500"/>
<dbReference type="VEuPathDB" id="PlasmoDB:PfHB3_050012500"/>
<dbReference type="VEuPathDB" id="PlasmoDB:PfIT_050012700"/>
<dbReference type="VEuPathDB" id="PlasmoDB:PfKE01_050012000"/>
<dbReference type="VEuPathDB" id="PlasmoDB:PfKH01_050012900"/>
<dbReference type="VEuPathDB" id="PlasmoDB:PfKH02_050013100"/>
<dbReference type="VEuPathDB" id="PlasmoDB:PfML01_050012400"/>
<dbReference type="VEuPathDB" id="PlasmoDB:PfNF135_050013100"/>
<dbReference type="VEuPathDB" id="PlasmoDB:PfNF166_050012700"/>
<dbReference type="VEuPathDB" id="PlasmoDB:PfNF54_050011800"/>
<dbReference type="VEuPathDB" id="PlasmoDB:PfSD01_050012500"/>
<dbReference type="VEuPathDB" id="PlasmoDB:PfSN01_050012800"/>
<dbReference type="VEuPathDB" id="PlasmoDB:PfTG01_050012500"/>
<dbReference type="EvolutionaryTrace" id="O61142"/>
<dbReference type="GO" id="GO:0005576">
    <property type="term" value="C:extracellular region"/>
    <property type="evidence" value="ECO:0007669"/>
    <property type="project" value="UniProtKB-SubCell"/>
</dbReference>
<dbReference type="GO" id="GO:0046872">
    <property type="term" value="F:metal ion binding"/>
    <property type="evidence" value="ECO:0007669"/>
    <property type="project" value="UniProtKB-KW"/>
</dbReference>
<dbReference type="GO" id="GO:0004252">
    <property type="term" value="F:serine-type endopeptidase activity"/>
    <property type="evidence" value="ECO:0000314"/>
    <property type="project" value="UniProtKB"/>
</dbReference>
<dbReference type="GO" id="GO:0006508">
    <property type="term" value="P:proteolysis"/>
    <property type="evidence" value="ECO:0007669"/>
    <property type="project" value="UniProtKB-KW"/>
</dbReference>
<dbReference type="CDD" id="cd07473">
    <property type="entry name" value="Peptidases_S8_Subtilisin_like"/>
    <property type="match status" value="1"/>
</dbReference>
<dbReference type="FunFam" id="3.40.50.200:FF:000023">
    <property type="entry name" value="Subtilisin-like protease 1"/>
    <property type="match status" value="1"/>
</dbReference>
<dbReference type="Gene3D" id="3.30.70.2380">
    <property type="match status" value="1"/>
</dbReference>
<dbReference type="Gene3D" id="3.40.50.200">
    <property type="entry name" value="Peptidase S8/S53 domain"/>
    <property type="match status" value="1"/>
</dbReference>
<dbReference type="InterPro" id="IPR017314">
    <property type="entry name" value="Pept_S8A_PfSUB_1"/>
</dbReference>
<dbReference type="InterPro" id="IPR000209">
    <property type="entry name" value="Peptidase_S8/S53_dom"/>
</dbReference>
<dbReference type="InterPro" id="IPR036852">
    <property type="entry name" value="Peptidase_S8/S53_dom_sf"/>
</dbReference>
<dbReference type="InterPro" id="IPR051048">
    <property type="entry name" value="Peptidase_S8/S53_subtilisin"/>
</dbReference>
<dbReference type="InterPro" id="IPR023827">
    <property type="entry name" value="Peptidase_S8_Asp-AS"/>
</dbReference>
<dbReference type="InterPro" id="IPR022398">
    <property type="entry name" value="Peptidase_S8_His-AS"/>
</dbReference>
<dbReference type="InterPro" id="IPR023828">
    <property type="entry name" value="Peptidase_S8_Ser-AS"/>
</dbReference>
<dbReference type="InterPro" id="IPR015500">
    <property type="entry name" value="Peptidase_S8_subtilisin-rel"/>
</dbReference>
<dbReference type="InterPro" id="IPR034204">
    <property type="entry name" value="PfSUB1-like_cat_dom"/>
</dbReference>
<dbReference type="InterPro" id="IPR041089">
    <property type="entry name" value="SUB1_ProdP9"/>
</dbReference>
<dbReference type="PANTHER" id="PTHR43399:SF4">
    <property type="entry name" value="CELL WALL-ASSOCIATED PROTEASE"/>
    <property type="match status" value="1"/>
</dbReference>
<dbReference type="PANTHER" id="PTHR43399">
    <property type="entry name" value="SUBTILISIN-RELATED"/>
    <property type="match status" value="1"/>
</dbReference>
<dbReference type="Pfam" id="PF00082">
    <property type="entry name" value="Peptidase_S8"/>
    <property type="match status" value="1"/>
</dbReference>
<dbReference type="Pfam" id="PF18213">
    <property type="entry name" value="SUB1_ProdP9"/>
    <property type="match status" value="1"/>
</dbReference>
<dbReference type="PIRSF" id="PIRSF037900">
    <property type="entry name" value="Subtilisin_rel_PfSUB_1"/>
    <property type="match status" value="1"/>
</dbReference>
<dbReference type="PRINTS" id="PR00723">
    <property type="entry name" value="SUBTILISIN"/>
</dbReference>
<dbReference type="SUPFAM" id="SSF52743">
    <property type="entry name" value="Subtilisin-like"/>
    <property type="match status" value="1"/>
</dbReference>
<dbReference type="PROSITE" id="PS51892">
    <property type="entry name" value="SUBTILASE"/>
    <property type="match status" value="1"/>
</dbReference>
<dbReference type="PROSITE" id="PS00136">
    <property type="entry name" value="SUBTILASE_ASP"/>
    <property type="match status" value="1"/>
</dbReference>
<dbReference type="PROSITE" id="PS00137">
    <property type="entry name" value="SUBTILASE_HIS"/>
    <property type="match status" value="1"/>
</dbReference>
<dbReference type="PROSITE" id="PS00138">
    <property type="entry name" value="SUBTILASE_SER"/>
    <property type="match status" value="1"/>
</dbReference>
<comment type="function">
    <text evidence="1">Serine protease which plays an essential role in merozoite invasion of and egress from host erythrocytes by processing and activating various merozoite surface and parasitophorous vacuole proteins. Mediates the proteolytic maturation of serine proteases SERA4, SERA5 and SERA6 just prior to merozoite egress. Prior to merozoite egress, cleaves merozoite surface proteins MSP1, MSP6 and MSP7, which form the MSP1/6/7 complex, and thereby may prime the parasite cell surface for invasion of fresh erythrocytes. Prior to merozoite egress, cleaves MSRP2 converting it to MSRP2 p25 form, and RAP1 converting it to RAP1 p67 form.</text>
</comment>
<comment type="catalytic activity">
    <reaction evidence="8 9 10 11">
        <text>Hydrolysis of proteins with broad specificity for peptide bonds, and a preference for a large uncharged residue in P1. Hydrolyzes peptide amides.</text>
        <dbReference type="EC" id="3.4.21.62"/>
    </reaction>
</comment>
<comment type="cofactor">
    <cofactor evidence="9 11">
        <name>Ca(2+)</name>
        <dbReference type="ChEBI" id="CHEBI:29108"/>
    </cofactor>
    <text evidence="11">Binds 3 Ca(2+) ions per subunit.</text>
</comment>
<comment type="activity regulation">
    <text evidence="1 9 10">p54 and probably p47 forms are inhibited by the non-covalent interaction with the cleaved propeptide (PubMed:12764150). Inhibited by subtilisin propeptide-like protein SUB1-ProM (By similarity). Inhibited by 3,4-dichloroisocoumarin (DCI) and 4-(hydroxymercuri)benzoic acid (pHMB) (PubMed:12052828). Partially inhibited by chymostatin, leupeptin, phenylmethylsulfonyl fluoride (PMSF), and 4-(2-aminoethyl)benzenesulfonyl fluoride (PubMed:12052828).</text>
</comment>
<comment type="biophysicochemical properties">
    <kinetics>
        <KM evidence="9">772 uM for PEP1 (Ac-LVSADNIDIS) peptide</KM>
        <KM evidence="9">769 uM for PEP1-D5E peptide</KM>
        <KM evidence="9">436 uM for PEP1-D5A peptide</KM>
        <KM evidence="9">2063 uM for PEP1-V2A peptide</KM>
    </kinetics>
    <phDependence>
        <text evidence="9">Optimum pH is 8.0.</text>
    </phDependence>
</comment>
<comment type="subunit">
    <text evidence="1 8 9 10 11">Heterodimer between p54 form and prodomain p31; the interaction inhibits p54 catalytic activity (PubMed:10617661, PubMed:12052828, PubMed:12764150, PubMed:24785947). Heterodimer p31-p54 is monomeric at basic pH and dimeric at acidic pH; dimerization is driven by the N-terminal prodomain (p31) (By similarity).</text>
</comment>
<comment type="subcellular location">
    <subcellularLocation>
        <location evidence="12">Secreted</location>
    </subcellularLocation>
    <subcellularLocation>
        <location evidence="1">Parasitophorous vacuole lumen</location>
    </subcellularLocation>
    <text evidence="1 12">At the schizont stage, in merozoites, localizes to dense secretory granules called exonemes (PubMed:9722575). Just prior to egress secreted into the parasitophorous vacuole (By similarity).</text>
</comment>
<comment type="developmental stage">
    <text evidence="8 9 12">Expressed during the parasite blood stage, specifically in schizonts and merozoites (at protein level).</text>
</comment>
<comment type="PTM">
    <text evidence="1 2 8 9 10 12">The prodomain (p31) is cleaved, probably by autocatalysis, during the transport to or in the Golgi apparatus, and remains non-covalently associated with the p54 form as an inhibitor (PubMed:10617661, PubMed:12764150, PubMed:9722575). p54 is further cleaved into the p47 form (PubMed:10617661, PubMed:9722575, PubMed:12052828). This cleavage is likely occurring in the exoneme prior to egress and is mediated by PMX/plasmepsin X (By similarity). The p54-to-p47 conversion can be also autocatalytic (PubMed:10617661). Heterodimer p31-p54 is activated by cleavage of prodomain (p31) by the aspartic protease PMX; cleavage by PMX abolishes inhibitory capacity of p31 (By similarity). Primary autocatalytic processing of SUB1 is essential for parasite growth; the p54-to-p47 conversion is dispensable for SUB1 functions in the parasites (By similarity).</text>
</comment>
<comment type="PTM">
    <text evidence="11">The disulfide bond between Cys-523 and Cys-536 acts as a redox-sensitive disulfide switch (PubMed:24785947). The oxidized form is required for catalytic activity (PubMed:24785947).</text>
</comment>
<comment type="PTM">
    <text evidence="8">The relevance of N-glycosylation is not clear. In an insect expression system, SUB1 glycosylation appears to affect its processing into the active mature form suggesting that SUB1 may not be N-glycosylated in parasites.</text>
</comment>
<comment type="similarity">
    <text evidence="6">Belongs to the peptidase S8 family.</text>
</comment>
<sequence length="690" mass="77875">MMLNKKVVALCTLTLHLFCIFLCLGKEVRSEENGKIQDDAKKIVSELRFLEKVEDVIEKSNIGGNEVDADENSFNPDTEVPIEEIEEIKMRELKDVKEEKNKNDNHNNNNNNNNISSSSSSSSNTFGEEKEEVSKKKKKLRLIVSENHATTPSFFQESLLEPDVLSFLESKGNLSNLKNINSMIIELKEDTTDDELISYIKILEEKGALIESDKLVSADNIDISGIKDAIRRGEENIDVNDYKSMLEVENDAEDYDKMFGMFNESHAATSKRKRHSTNERGYDTFSSPSYKTYSKSDYLYDDDNNNNNYYYSHSSNGHNSSSRNSSSSRSRPGKYHFNDEFRNLQWGLDLSRLDETQELINEHQVMSTRICVIDSGIDYNHPDLKDNIELNLKELHGRKGFDDDNNGIVDDIYGANFVNNSGNPMDDNYHGTHVSGIISAIGNNNIGVVGVDVNSKLIICKALDEHKLGRLGDMFKCLDYCISRNAHMINGSFSFDEYSGIFNSSVEYLQRKGILFFVSASNCSHPKSSTPDIRKCDLSINAKYPPILSTVYDNVISVANLKKNDNNNHYSLSINSFYSNKYCQLAAPGTNIYSTAPHNSYRKLNGTSMAAPHVAAIASLIFSINPDLSYKKVIQILKDSIVYLPSLKNMVAWAGYADINKAVNLAIKSKKTYINSNISNKWKKKSRYLH</sequence>
<feature type="signal peptide" evidence="16">
    <location>
        <begin position="1"/>
        <end position="25"/>
    </location>
</feature>
<feature type="propeptide" id="PRO_0000450201" description="Inhibition peptide" evidence="10 16 17">
    <location>
        <begin position="26"/>
        <end position="219"/>
    </location>
</feature>
<feature type="chain" id="PRO_5004159015" description="Subtilisin-like protease 1" evidence="3">
    <location>
        <begin position="220"/>
        <end position="690"/>
    </location>
</feature>
<feature type="domain" description="Peptidase S8" evidence="5">
    <location>
        <begin position="345"/>
        <end position="663"/>
    </location>
</feature>
<feature type="region of interest" description="Disordered" evidence="7">
    <location>
        <begin position="99"/>
        <end position="131"/>
    </location>
</feature>
<feature type="region of interest" description="Disordered" evidence="7">
    <location>
        <begin position="266"/>
        <end position="286"/>
    </location>
</feature>
<feature type="region of interest" description="Disordered" evidence="7">
    <location>
        <begin position="305"/>
        <end position="334"/>
    </location>
</feature>
<feature type="compositionally biased region" description="Low complexity" evidence="7">
    <location>
        <begin position="106"/>
        <end position="124"/>
    </location>
</feature>
<feature type="compositionally biased region" description="Low complexity" evidence="7">
    <location>
        <begin position="305"/>
        <end position="330"/>
    </location>
</feature>
<feature type="active site" description="Charge relay system" evidence="5">
    <location>
        <position position="374"/>
    </location>
</feature>
<feature type="active site" description="Charge relay system" evidence="5">
    <location>
        <position position="430"/>
    </location>
</feature>
<feature type="active site" description="Charge relay system" evidence="5">
    <location>
        <position position="608"/>
    </location>
</feature>
<feature type="binding site" evidence="1">
    <location>
        <position position="147"/>
    </location>
    <ligand>
        <name>Ca(2+)</name>
        <dbReference type="ChEBI" id="CHEBI:29108"/>
        <label>4</label>
    </ligand>
</feature>
<feature type="binding site" evidence="1">
    <location>
        <position position="150"/>
    </location>
    <ligand>
        <name>Ca(2+)</name>
        <dbReference type="ChEBI" id="CHEBI:29108"/>
        <label>4</label>
    </ligand>
</feature>
<feature type="binding site" evidence="1">
    <location>
        <position position="152"/>
    </location>
    <ligand>
        <name>Ca(2+)</name>
        <dbReference type="ChEBI" id="CHEBI:29108"/>
        <label>4</label>
    </ligand>
</feature>
<feature type="binding site" evidence="1">
    <location>
        <position position="207"/>
    </location>
    <ligand>
        <name>Ca(2+)</name>
        <dbReference type="ChEBI" id="CHEBI:29108"/>
        <label>4</label>
    </ligand>
</feature>
<feature type="binding site" evidence="11 21 22">
    <location>
        <position position="340"/>
    </location>
    <ligand>
        <name>Ca(2+)</name>
        <dbReference type="ChEBI" id="CHEBI:29108"/>
        <label>1</label>
    </ligand>
</feature>
<feature type="binding site" evidence="11 21 22">
    <location>
        <position position="383"/>
    </location>
    <ligand>
        <name>Ca(2+)</name>
        <dbReference type="ChEBI" id="CHEBI:29108"/>
        <label>1</label>
    </ligand>
</feature>
<feature type="binding site" evidence="11 21 22">
    <location>
        <position position="394"/>
    </location>
    <ligand>
        <name>Ca(2+)</name>
        <dbReference type="ChEBI" id="CHEBI:29108"/>
        <label>2</label>
    </ligand>
</feature>
<feature type="binding site" evidence="11 21 22">
    <location>
        <position position="394"/>
    </location>
    <ligand>
        <name>Ca(2+)</name>
        <dbReference type="ChEBI" id="CHEBI:29108"/>
        <label>3</label>
    </ligand>
</feature>
<feature type="binding site" evidence="11 21 22">
    <location>
        <position position="398"/>
    </location>
    <ligand>
        <name>Ca(2+)</name>
        <dbReference type="ChEBI" id="CHEBI:29108"/>
        <label>2</label>
    </ligand>
</feature>
<feature type="binding site" evidence="11 21 22">
    <location>
        <position position="401"/>
    </location>
    <ligand>
        <name>Ca(2+)</name>
        <dbReference type="ChEBI" id="CHEBI:29108"/>
        <label>2</label>
    </ligand>
</feature>
<feature type="binding site" evidence="11 21 22">
    <location>
        <position position="402"/>
    </location>
    <ligand>
        <name>Ca(2+)</name>
        <dbReference type="ChEBI" id="CHEBI:29108"/>
        <label>3</label>
    </ligand>
</feature>
<feature type="binding site" evidence="11 21 22">
    <location>
        <position position="403"/>
    </location>
    <ligand>
        <name>Ca(2+)</name>
        <dbReference type="ChEBI" id="CHEBI:29108"/>
        <label>2</label>
    </ligand>
</feature>
<feature type="binding site" evidence="11 21 22">
    <location>
        <position position="404"/>
    </location>
    <ligand>
        <name>Ca(2+)</name>
        <dbReference type="ChEBI" id="CHEBI:29108"/>
        <label>3</label>
    </ligand>
</feature>
<feature type="binding site" evidence="11 21 22">
    <location>
        <position position="406"/>
    </location>
    <ligand>
        <name>Ca(2+)</name>
        <dbReference type="ChEBI" id="CHEBI:29108"/>
        <label>3</label>
    </ligand>
</feature>
<feature type="binding site" evidence="11 21 22">
    <location>
        <position position="408"/>
    </location>
    <ligand>
        <name>Ca(2+)</name>
        <dbReference type="ChEBI" id="CHEBI:29108"/>
        <label>3</label>
    </ligand>
</feature>
<feature type="binding site" evidence="11 21 22">
    <location>
        <position position="410"/>
    </location>
    <ligand>
        <name>Ca(2+)</name>
        <dbReference type="ChEBI" id="CHEBI:29108"/>
        <label>2</label>
    </ligand>
</feature>
<feature type="binding site" evidence="11 21 22">
    <location>
        <position position="411"/>
    </location>
    <ligand>
        <name>Ca(2+)</name>
        <dbReference type="ChEBI" id="CHEBI:29108"/>
        <label>3</label>
    </ligand>
</feature>
<feature type="binding site" evidence="11 21 22">
    <location>
        <position position="441"/>
    </location>
    <ligand>
        <name>Ca(2+)</name>
        <dbReference type="ChEBI" id="CHEBI:29108"/>
        <label>1</label>
    </ligand>
</feature>
<feature type="binding site" evidence="11 21 22">
    <location>
        <position position="444"/>
    </location>
    <ligand>
        <name>Ca(2+)</name>
        <dbReference type="ChEBI" id="CHEBI:29108"/>
        <label>1</label>
    </ligand>
</feature>
<feature type="binding site" evidence="11 21 22">
    <location>
        <position position="446"/>
    </location>
    <ligand>
        <name>Ca(2+)</name>
        <dbReference type="ChEBI" id="CHEBI:29108"/>
        <label>1</label>
    </ligand>
</feature>
<feature type="binding site" evidence="11 21 22">
    <location>
        <position position="448"/>
    </location>
    <ligand>
        <name>Ca(2+)</name>
        <dbReference type="ChEBI" id="CHEBI:29108"/>
        <label>1</label>
    </ligand>
</feature>
<feature type="site" description="Cleavage; by PMX" evidence="1">
    <location>
        <begin position="49"/>
        <end position="50"/>
    </location>
</feature>
<feature type="site" description="Cleavage; by PMX" evidence="1">
    <location>
        <begin position="154"/>
        <end position="155"/>
    </location>
</feature>
<feature type="site" description="Cleavage; by PMX" evidence="1">
    <location>
        <begin position="167"/>
        <end position="168"/>
    </location>
</feature>
<feature type="site" description="Cleavage; by autolysis" evidence="8">
    <location>
        <begin position="219"/>
        <end position="220"/>
    </location>
</feature>
<feature type="site" description="Cleavage; by PMX" evidence="1">
    <location>
        <begin position="245"/>
        <end position="246"/>
    </location>
</feature>
<feature type="site" description="Cleavage" evidence="8">
    <location>
        <begin position="251"/>
        <end position="252"/>
    </location>
</feature>
<feature type="glycosylation site" description="N-linked (GlcNAc...) asparagine" evidence="4">
    <location>
        <position position="114"/>
    </location>
</feature>
<feature type="glycosylation site" description="N-linked (GlcNAc...) asparagine" evidence="4">
    <location>
        <position position="173"/>
    </location>
</feature>
<feature type="glycosylation site" description="N-linked (GlcNAc...) asparagine" evidence="4">
    <location>
        <position position="263"/>
    </location>
</feature>
<feature type="glycosylation site" description="N-linked (GlcNAc...) asparagine" evidence="4">
    <location>
        <position position="319"/>
    </location>
</feature>
<feature type="glycosylation site" description="N-linked (GlcNAc...) asparagine" evidence="4">
    <location>
        <position position="324"/>
    </location>
</feature>
<feature type="glycosylation site" description="N-linked (GlcNAc...) asparagine" evidence="4">
    <location>
        <position position="419"/>
    </location>
</feature>
<feature type="glycosylation site" description="N-linked (GlcNAc...) asparagine" evidence="4">
    <location>
        <position position="490"/>
    </location>
</feature>
<feature type="glycosylation site" description="N-linked (GlcNAc...) asparagine" evidence="4">
    <location>
        <position position="503"/>
    </location>
</feature>
<feature type="glycosylation site" description="N-linked (GlcNAc...) asparagine" evidence="4">
    <location>
        <position position="522"/>
    </location>
</feature>
<feature type="glycosylation site" description="N-linked (GlcNAc...) asparagine" evidence="4">
    <location>
        <position position="605"/>
    </location>
</feature>
<feature type="glycosylation site" description="N-linked (GlcNAc...) asparagine" evidence="4">
    <location>
        <position position="677"/>
    </location>
</feature>
<feature type="disulfide bond" evidence="11 21 22">
    <location>
        <begin position="371"/>
        <end position="481"/>
    </location>
</feature>
<feature type="disulfide bond" evidence="11 21 22">
    <location>
        <begin position="460"/>
        <end position="477"/>
    </location>
</feature>
<feature type="disulfide bond" evidence="11 21 22">
    <location>
        <begin position="523"/>
        <end position="536"/>
    </location>
</feature>
<feature type="mutagenesis site" description="Does not affect p31-p54 proteolytic processing." evidence="9">
    <original>D</original>
    <variation>A</variation>
    <variation>N</variation>
    <location>
        <position position="219"/>
    </location>
</feature>
<feature type="mutagenesis site" description="Abolishes p31-p54 proteolytic processing." evidence="9">
    <original>D</original>
    <variation>L</variation>
    <location>
        <position position="219"/>
    </location>
</feature>
<feature type="mutagenesis site" description="Severely reduces catalytic activity without affecting processing into mature form." evidence="11">
    <original>C</original>
    <variation>A</variation>
    <location>
        <position position="523"/>
    </location>
</feature>
<feature type="mutagenesis site" description="Severely reduces catalytic activity without affecting processing into mature form." evidence="11">
    <original>C</original>
    <variation>A</variation>
    <location>
        <position position="536"/>
    </location>
</feature>
<feature type="mutagenesis site" description="No effect on catalytic activity and processing into mature form." evidence="11">
    <original>C</original>
    <variation>A</variation>
    <location>
        <position position="583"/>
    </location>
</feature>
<feature type="mutagenesis site" description="Abolishes the autocatalytic processing of the p54 form." evidence="8">
    <original>S</original>
    <variation>A</variation>
    <location>
        <position position="608"/>
    </location>
</feature>
<feature type="sequence conflict" description="In Ref. 1; CAA05261." evidence="15" ref="1">
    <location>
        <position position="1"/>
    </location>
</feature>
<feature type="sequence conflict" description="In Ref. 2; CAC80338." evidence="15" ref="2">
    <original>H</original>
    <variation>HHHHHH</variation>
    <location>
        <position position="690"/>
    </location>
</feature>
<feature type="strand" evidence="23">
    <location>
        <begin position="141"/>
        <end position="146"/>
    </location>
</feature>
<feature type="strand" evidence="23">
    <location>
        <begin position="150"/>
        <end position="152"/>
    </location>
</feature>
<feature type="helix" evidence="23">
    <location>
        <begin position="154"/>
        <end position="158"/>
    </location>
</feature>
<feature type="helix" evidence="23">
    <location>
        <begin position="162"/>
        <end position="171"/>
    </location>
</feature>
<feature type="strand" evidence="23">
    <location>
        <begin position="172"/>
        <end position="177"/>
    </location>
</feature>
<feature type="helix" evidence="23">
    <location>
        <begin position="178"/>
        <end position="180"/>
    </location>
</feature>
<feature type="strand" evidence="23">
    <location>
        <begin position="182"/>
        <end position="187"/>
    </location>
</feature>
<feature type="helix" evidence="23">
    <location>
        <begin position="193"/>
        <end position="205"/>
    </location>
</feature>
<feature type="strand" evidence="23">
    <location>
        <begin position="208"/>
        <end position="212"/>
    </location>
</feature>
<feature type="strand" evidence="23">
    <location>
        <begin position="215"/>
        <end position="217"/>
    </location>
</feature>
<feature type="strand" evidence="24">
    <location>
        <begin position="337"/>
        <end position="341"/>
    </location>
</feature>
<feature type="helix" evidence="23">
    <location>
        <begin position="342"/>
        <end position="344"/>
    </location>
</feature>
<feature type="helix" evidence="23">
    <location>
        <begin position="346"/>
        <end position="351"/>
    </location>
</feature>
<feature type="turn" evidence="23">
    <location>
        <begin position="354"/>
        <end position="356"/>
    </location>
</feature>
<feature type="helix" evidence="23">
    <location>
        <begin position="357"/>
        <end position="363"/>
    </location>
</feature>
<feature type="strand" evidence="23">
    <location>
        <begin position="369"/>
        <end position="375"/>
    </location>
</feature>
<feature type="turn" evidence="23">
    <location>
        <begin position="382"/>
        <end position="384"/>
    </location>
</feature>
<feature type="helix" evidence="23">
    <location>
        <begin position="385"/>
        <end position="387"/>
    </location>
</feature>
<feature type="helix" evidence="23">
    <location>
        <begin position="392"/>
        <end position="395"/>
    </location>
</feature>
<feature type="strand" evidence="23">
    <location>
        <begin position="412"/>
        <end position="416"/>
    </location>
</feature>
<feature type="turn" evidence="23">
    <location>
        <begin position="417"/>
        <end position="420"/>
    </location>
</feature>
<feature type="strand" evidence="23">
    <location>
        <begin position="427"/>
        <end position="429"/>
    </location>
</feature>
<feature type="helix" evidence="23">
    <location>
        <begin position="430"/>
        <end position="439"/>
    </location>
</feature>
<feature type="strand" evidence="23">
    <location>
        <begin position="442"/>
        <end position="447"/>
    </location>
</feature>
<feature type="strand" evidence="23">
    <location>
        <begin position="456"/>
        <end position="461"/>
    </location>
</feature>
<feature type="strand" evidence="23">
    <location>
        <begin position="467"/>
        <end position="470"/>
    </location>
</feature>
<feature type="helix" evidence="23">
    <location>
        <begin position="471"/>
        <end position="483"/>
    </location>
</feature>
<feature type="strand" evidence="23">
    <location>
        <begin position="487"/>
        <end position="491"/>
    </location>
</feature>
<feature type="strand" evidence="23">
    <location>
        <begin position="494"/>
        <end position="497"/>
    </location>
</feature>
<feature type="helix" evidence="23">
    <location>
        <begin position="500"/>
        <end position="511"/>
    </location>
</feature>
<feature type="strand" evidence="23">
    <location>
        <begin position="515"/>
        <end position="519"/>
    </location>
</feature>
<feature type="strand" evidence="23">
    <location>
        <begin position="527"/>
        <end position="530"/>
    </location>
</feature>
<feature type="helix" evidence="23">
    <location>
        <begin position="533"/>
        <end position="536"/>
    </location>
</feature>
<feature type="turn" evidence="23">
    <location>
        <begin position="538"/>
        <end position="540"/>
    </location>
</feature>
<feature type="helix" evidence="23">
    <location>
        <begin position="546"/>
        <end position="550"/>
    </location>
</feature>
<feature type="strand" evidence="23">
    <location>
        <begin position="555"/>
        <end position="563"/>
    </location>
</feature>
<feature type="strand" evidence="23">
    <location>
        <begin position="565"/>
        <end position="568"/>
    </location>
</feature>
<feature type="strand" evidence="23">
    <location>
        <begin position="570"/>
        <end position="572"/>
    </location>
</feature>
<feature type="turn" evidence="23">
    <location>
        <begin position="580"/>
        <end position="582"/>
    </location>
</feature>
<feature type="strand" evidence="23">
    <location>
        <begin position="585"/>
        <end position="588"/>
    </location>
</feature>
<feature type="strand" evidence="23">
    <location>
        <begin position="590"/>
        <end position="596"/>
    </location>
</feature>
<feature type="turn" evidence="23">
    <location>
        <begin position="597"/>
        <end position="599"/>
    </location>
</feature>
<feature type="strand" evidence="23">
    <location>
        <begin position="600"/>
        <end position="604"/>
    </location>
</feature>
<feature type="helix" evidence="23">
    <location>
        <begin position="607"/>
        <end position="624"/>
    </location>
</feature>
<feature type="helix" evidence="23">
    <location>
        <begin position="630"/>
        <end position="639"/>
    </location>
</feature>
<feature type="strand" evidence="23">
    <location>
        <begin position="641"/>
        <end position="643"/>
    </location>
</feature>
<feature type="helix" evidence="23">
    <location>
        <begin position="645"/>
        <end position="647"/>
    </location>
</feature>
<feature type="turn" evidence="23">
    <location>
        <begin position="648"/>
        <end position="650"/>
    </location>
</feature>
<feature type="strand" evidence="23">
    <location>
        <begin position="655"/>
        <end position="657"/>
    </location>
</feature>
<feature type="helix" evidence="23">
    <location>
        <begin position="659"/>
        <end position="668"/>
    </location>
</feature>
<name>SUB1_PLAFA</name>
<organism evidence="19">
    <name type="scientific">Plasmodium falciparum</name>
    <dbReference type="NCBI Taxonomy" id="5833"/>
    <lineage>
        <taxon>Eukaryota</taxon>
        <taxon>Sar</taxon>
        <taxon>Alveolata</taxon>
        <taxon>Apicomplexa</taxon>
        <taxon>Aconoidasida</taxon>
        <taxon>Haemosporida</taxon>
        <taxon>Plasmodiidae</taxon>
        <taxon>Plasmodium</taxon>
        <taxon>Plasmodium (Laverania)</taxon>
    </lineage>
</organism>
<gene>
    <name evidence="1" type="primary">SUB1</name>
</gene>
<reference evidence="18 19" key="1">
    <citation type="journal article" date="1998" name="J. Biol. Chem.">
        <title>A subtilisin-like protein in secretory organelles of Plasmodium falciparum merozoites.</title>
        <authorList>
            <person name="Blackman M.J."/>
            <person name="Fujioka H."/>
            <person name="Stafford W.H."/>
            <person name="Sajid M."/>
            <person name="Clough B."/>
            <person name="Fleck S.L."/>
            <person name="Aikawa M."/>
            <person name="Grainger M."/>
            <person name="Hackett F."/>
        </authorList>
    </citation>
    <scope>NUCLEOTIDE SEQUENCE [GENOMIC DNA / MRNA]</scope>
    <scope>SUBCELLULAR LOCATION</scope>
    <scope>DEVELOPMENTAL STAGE</scope>
    <scope>PROTEOLYTIC CLEAVAGE</scope>
    <source>
        <strain evidence="18">T9/96</strain>
    </source>
</reference>
<reference evidence="20" key="2">
    <citation type="journal article" date="1999" name="Protein Eng.">
        <title>PCR-based gene synthesis as an efficient approach for expression of the A+T-rich malaria genome.</title>
        <authorList>
            <person name="Withers-Martinez C."/>
            <person name="Carpenter E.P."/>
            <person name="Hackett F."/>
            <person name="Sajid M."/>
            <person name="Grainger M."/>
            <person name="Blackman M.J."/>
        </authorList>
    </citation>
    <scope>NUCLEOTIDE SEQUENCE [GENOMIC DNA]</scope>
</reference>
<reference evidence="15" key="3">
    <citation type="journal article" date="2000" name="J. Biol. Chem.">
        <title>Maturation and specificity of Plasmodium falciparum subtilisin-like protease-1, a malaria merozoite subtilisin-like serine protease.</title>
        <authorList>
            <person name="Sajid M."/>
            <person name="Withers-Martinez C."/>
            <person name="Blackman M.J."/>
        </authorList>
    </citation>
    <scope>CATALYTIC ACTIVITY</scope>
    <scope>SUBUNIT</scope>
    <scope>DEVELOPMENTAL STAGE</scope>
    <scope>PROTEOLYTIC CLEAVAGE</scope>
    <scope>GLYCOSYLATION</scope>
    <scope>MUTAGENESIS OF SER-608</scope>
</reference>
<reference key="4">
    <citation type="journal article" date="2002" name="J. Biol. Chem.">
        <title>Expression of recombinant Plasmodium falciparum subtilisin-like protease-1 in insect cells. Characterization, comparison with the parasite protease, and homology modeling.</title>
        <authorList>
            <person name="Withers-Martinez C."/>
            <person name="Saldanha J.W."/>
            <person name="Ely B."/>
            <person name="Hackett F."/>
            <person name="O'Connor T."/>
            <person name="Blackman M.J."/>
        </authorList>
    </citation>
    <scope>CATALYTIC ACTIVITY</scope>
    <scope>COFACTOR</scope>
    <scope>ACTIVITY REGULATION</scope>
    <scope>BIOPHYSICOCHEMICAL PROPERTIES</scope>
    <scope>SUBUNIT</scope>
    <scope>DEVELOPMENTAL STAGE</scope>
    <scope>PROTEOLYTIC PROCESSING</scope>
    <scope>MUTAGENESIS OF ASP-219</scope>
</reference>
<reference evidence="15" key="5">
    <citation type="journal article" date="2003" name="J. Biol. Chem.">
        <title>Functional characterization of the propeptide of Plasmodium falciparum subtilisin-like protease-1.</title>
        <authorList>
            <person name="Jean L."/>
            <person name="Hackett F."/>
            <person name="Martin S.R."/>
            <person name="Blackman M.J."/>
        </authorList>
    </citation>
    <scope>CATALYTIC ACTIVITY</scope>
    <scope>ACTIVITY REGULATION</scope>
    <scope>SUBUNIT</scope>
    <scope>PROTEOLYTIC CLEAVAGE</scope>
</reference>
<reference evidence="21 22" key="6">
    <citation type="journal article" date="2014" name="Nat. Commun.">
        <title>The malaria parasite egress protease SUB1 is a calcium-dependent redox switch subtilisin.</title>
        <authorList>
            <person name="Withers-Martinez C."/>
            <person name="Strath M."/>
            <person name="Hackett F."/>
            <person name="Haire L.F."/>
            <person name="Howell S.A."/>
            <person name="Walker P.A."/>
            <person name="Christodoulou E."/>
            <person name="Evangelos C."/>
            <person name="Dodson G.G."/>
            <person name="Blackman M.J."/>
        </authorList>
    </citation>
    <scope>X-RAY CRYSTALLOGRAPHY (2.25 ANGSTROMS) OF 330-673 AND 127-219 IN COMPLEX WITH CALCIUM</scope>
    <scope>CATALYTIC ACTIVITY</scope>
    <scope>COFACTOR</scope>
    <scope>SUBUNIT</scope>
    <scope>DISULFIDE BONDS</scope>
    <scope>MUTAGENESIS OF CYS-523; CYS-536 AND CYS-583</scope>
</reference>
<keyword id="KW-0002">3D-structure</keyword>
<keyword id="KW-0106">Calcium</keyword>
<keyword id="KW-1015">Disulfide bond</keyword>
<keyword id="KW-0325">Glycoprotein</keyword>
<keyword id="KW-0378">Hydrolase</keyword>
<keyword id="KW-0479">Metal-binding</keyword>
<keyword id="KW-0645">Protease</keyword>
<keyword id="KW-0964">Secreted</keyword>
<keyword id="KW-0720">Serine protease</keyword>
<keyword id="KW-0732">Signal</keyword>
<keyword id="KW-0865">Zymogen</keyword>
<protein>
    <recommendedName>
        <fullName evidence="14">Subtilisin-like protease 1</fullName>
        <ecNumber evidence="8 9 10 11">3.4.21.62</ecNumber>
    </recommendedName>
    <alternativeName>
        <fullName evidence="13 14">PfSUB-1</fullName>
    </alternativeName>
</protein>
<proteinExistence type="evidence at protein level"/>
<evidence type="ECO:0000250" key="1">
    <source>
        <dbReference type="UniProtKB" id="Q8I0V0"/>
    </source>
</evidence>
<evidence type="ECO:0000250" key="2">
    <source>
        <dbReference type="UniProtKB" id="W7K9M0"/>
    </source>
</evidence>
<evidence type="ECO:0000255" key="3"/>
<evidence type="ECO:0000255" key="4">
    <source>
        <dbReference type="PROSITE-ProRule" id="PRU00498"/>
    </source>
</evidence>
<evidence type="ECO:0000255" key="5">
    <source>
        <dbReference type="PROSITE-ProRule" id="PRU01240"/>
    </source>
</evidence>
<evidence type="ECO:0000255" key="6">
    <source>
        <dbReference type="RuleBase" id="RU003355"/>
    </source>
</evidence>
<evidence type="ECO:0000256" key="7">
    <source>
        <dbReference type="SAM" id="MobiDB-lite"/>
    </source>
</evidence>
<evidence type="ECO:0000269" key="8">
    <source>
    </source>
</evidence>
<evidence type="ECO:0000269" key="9">
    <source>
    </source>
</evidence>
<evidence type="ECO:0000269" key="10">
    <source>
    </source>
</evidence>
<evidence type="ECO:0000269" key="11">
    <source>
    </source>
</evidence>
<evidence type="ECO:0000269" key="12">
    <source>
    </source>
</evidence>
<evidence type="ECO:0000303" key="13">
    <source>
    </source>
</evidence>
<evidence type="ECO:0000303" key="14">
    <source>
    </source>
</evidence>
<evidence type="ECO:0000305" key="15"/>
<evidence type="ECO:0000305" key="16">
    <source>
    </source>
</evidence>
<evidence type="ECO:0000305" key="17">
    <source>
    </source>
</evidence>
<evidence type="ECO:0000312" key="18">
    <source>
        <dbReference type="EMBL" id="CAA05261.1"/>
    </source>
</evidence>
<evidence type="ECO:0000312" key="19">
    <source>
        <dbReference type="EMBL" id="CAA05627.1"/>
    </source>
</evidence>
<evidence type="ECO:0000312" key="20">
    <source>
        <dbReference type="EMBL" id="CAC80338.1"/>
    </source>
</evidence>
<evidence type="ECO:0007744" key="21">
    <source>
        <dbReference type="PDB" id="4LVN"/>
    </source>
</evidence>
<evidence type="ECO:0007744" key="22">
    <source>
        <dbReference type="PDB" id="4LVO"/>
    </source>
</evidence>
<evidence type="ECO:0007829" key="23">
    <source>
        <dbReference type="PDB" id="4LVN"/>
    </source>
</evidence>
<evidence type="ECO:0007829" key="24">
    <source>
        <dbReference type="PDB" id="4LVO"/>
    </source>
</evidence>